<sequence length="520" mass="56900">MAALRLLAWAFSRRVSAHRPQPTLPHHLIRHYPTTRCGKVKFYTDPVKAVEGIKDGASVMLGGFGLCGIPENLIGALKTKGVKDLKIISSNVGVDDFGLGILLASKQVRRVVCSYLGENKLCEQLYLAGKLELEMTPQGTLAERIRAGGTGVPAFYTPTGYGTQVQEGGVPIRYSPEGHLITLSQPREVREFEGQHHLLERAIRADFALIKGWKADRSGNVIFRGSARNFNVPMCKAADISVVEVEEIVDVGTFAPEDIHIPNIYVKRVIKGPRFEKRIERLTTRDSPPAPGSKDQDPKRTRIIKRAALEFKDGMYANLGIGIPVLASNYISPKMTVYLHSENGILGLGPFPLKKEVDPDIINAGKQTVTVIPGGCFFASDDSFAMIRGGHIQLTMLGAMQVSKYGDLANWMVPGKKVKGMGGAMDLVSSKKTKVVVTMEHCTKTKQPKILEKCTMPLTGKSCVDLIITEKAVFEVDRSKGLKLVELWEGSSLDEVKATTGCSFKVCPNLKPMQQIKSDA</sequence>
<dbReference type="EC" id="2.8.3.5"/>
<dbReference type="EMBL" id="BC083681">
    <property type="protein sequence ID" value="AAH83681.1"/>
    <property type="molecule type" value="mRNA"/>
</dbReference>
<dbReference type="RefSeq" id="NP_001012221.1">
    <property type="nucleotide sequence ID" value="NM_001012221.1"/>
</dbReference>
<dbReference type="SMR" id="Q5XIJ9"/>
<dbReference type="FunCoup" id="Q5XIJ9">
    <property type="interactions" value="63"/>
</dbReference>
<dbReference type="iPTMnet" id="Q5XIJ9"/>
<dbReference type="PhosphoSitePlus" id="Q5XIJ9"/>
<dbReference type="GeneID" id="366463"/>
<dbReference type="KEGG" id="rno:366463"/>
<dbReference type="UCSC" id="RGD:1306953">
    <property type="organism name" value="rat"/>
</dbReference>
<dbReference type="AGR" id="RGD:1306953"/>
<dbReference type="CTD" id="353371"/>
<dbReference type="RGD" id="1306953">
    <property type="gene designation" value="Oxct2a"/>
</dbReference>
<dbReference type="InParanoid" id="Q5XIJ9"/>
<dbReference type="OrthoDB" id="31971at9989"/>
<dbReference type="PhylomeDB" id="Q5XIJ9"/>
<dbReference type="UniPathway" id="UPA00929">
    <property type="reaction ID" value="UER00894"/>
</dbReference>
<dbReference type="PRO" id="PR:Q5XIJ9"/>
<dbReference type="Proteomes" id="UP000002494">
    <property type="component" value="Unplaced"/>
</dbReference>
<dbReference type="GO" id="GO:0005739">
    <property type="term" value="C:mitochondrion"/>
    <property type="evidence" value="ECO:0000266"/>
    <property type="project" value="RGD"/>
</dbReference>
<dbReference type="GO" id="GO:0031514">
    <property type="term" value="C:motile cilium"/>
    <property type="evidence" value="ECO:0000266"/>
    <property type="project" value="RGD"/>
</dbReference>
<dbReference type="GO" id="GO:0008260">
    <property type="term" value="F:succinyl-CoA:3-oxo-acid CoA-transferase activity"/>
    <property type="evidence" value="ECO:0000318"/>
    <property type="project" value="GO_Central"/>
</dbReference>
<dbReference type="GO" id="GO:0046952">
    <property type="term" value="P:ketone body catabolic process"/>
    <property type="evidence" value="ECO:0007669"/>
    <property type="project" value="InterPro"/>
</dbReference>
<dbReference type="GO" id="GO:1902224">
    <property type="term" value="P:ketone body metabolic process"/>
    <property type="evidence" value="ECO:0000318"/>
    <property type="project" value="GO_Central"/>
</dbReference>
<dbReference type="FunFam" id="3.40.1080.10:FF:000001">
    <property type="entry name" value="Succinyl-coa:3-ketoacid-coenzyme a transferase subunit b"/>
    <property type="match status" value="1"/>
</dbReference>
<dbReference type="FunFam" id="3.40.1080.10:FF:000002">
    <property type="entry name" value="Succinyl-CoA:3-ketoacid-coenzyme A transferase, mitochondrial"/>
    <property type="match status" value="1"/>
</dbReference>
<dbReference type="Gene3D" id="3.40.1080.10">
    <property type="entry name" value="Glutaconate Coenzyme A-transferase"/>
    <property type="match status" value="2"/>
</dbReference>
<dbReference type="InterPro" id="IPR012792">
    <property type="entry name" value="3-oxoacid_CoA-transf_A"/>
</dbReference>
<dbReference type="InterPro" id="IPR012791">
    <property type="entry name" value="3-oxoacid_CoA-transf_B"/>
</dbReference>
<dbReference type="InterPro" id="IPR014388">
    <property type="entry name" value="3-oxoacid_CoA-transferase"/>
</dbReference>
<dbReference type="InterPro" id="IPR004165">
    <property type="entry name" value="CoA_trans_fam_I"/>
</dbReference>
<dbReference type="InterPro" id="IPR004164">
    <property type="entry name" value="CoA_transf_AS"/>
</dbReference>
<dbReference type="InterPro" id="IPR004163">
    <property type="entry name" value="CoA_transf_BS"/>
</dbReference>
<dbReference type="InterPro" id="IPR037171">
    <property type="entry name" value="NagB/RpiA_transferase-like"/>
</dbReference>
<dbReference type="NCBIfam" id="TIGR02429">
    <property type="entry name" value="pcaI_scoA_fam"/>
    <property type="match status" value="1"/>
</dbReference>
<dbReference type="NCBIfam" id="TIGR02428">
    <property type="entry name" value="pcaJ_scoB_fam"/>
    <property type="match status" value="1"/>
</dbReference>
<dbReference type="PANTHER" id="PTHR13707">
    <property type="entry name" value="KETOACID-COENZYME A TRANSFERASE"/>
    <property type="match status" value="1"/>
</dbReference>
<dbReference type="PANTHER" id="PTHR13707:SF28">
    <property type="entry name" value="SUCCINYL-COA:3-KETOACID COENZYME A TRANSFERASE 2, MITOCHONDRIAL"/>
    <property type="match status" value="1"/>
</dbReference>
<dbReference type="Pfam" id="PF01144">
    <property type="entry name" value="CoA_trans"/>
    <property type="match status" value="2"/>
</dbReference>
<dbReference type="PIRSF" id="PIRSF000858">
    <property type="entry name" value="SCOT-t"/>
    <property type="match status" value="1"/>
</dbReference>
<dbReference type="SMART" id="SM00882">
    <property type="entry name" value="CoA_trans"/>
    <property type="match status" value="2"/>
</dbReference>
<dbReference type="SUPFAM" id="SSF100950">
    <property type="entry name" value="NagB/RpiA/CoA transferase-like"/>
    <property type="match status" value="2"/>
</dbReference>
<dbReference type="PROSITE" id="PS01273">
    <property type="entry name" value="COA_TRANSF_1"/>
    <property type="match status" value="1"/>
</dbReference>
<dbReference type="PROSITE" id="PS01274">
    <property type="entry name" value="COA_TRANSF_2"/>
    <property type="match status" value="1"/>
</dbReference>
<comment type="function">
    <text evidence="1">Key enzyme for ketone body catabolism. Transfers the CoA moiety from succinate to acetoacetate. Formation of the enzyme-CoA intermediate proceeds via an unstable anhydride species formed between the carboxylate groups of the enzyme and substrate (By similarity). Probably play and important roles in the energy metabolism of spermatozoa (By similarity).</text>
</comment>
<comment type="catalytic activity">
    <reaction evidence="2">
        <text>a 3-oxo acid + succinyl-CoA = a 3-oxoacyl-CoA + succinate</text>
        <dbReference type="Rhea" id="RHEA:24564"/>
        <dbReference type="ChEBI" id="CHEBI:30031"/>
        <dbReference type="ChEBI" id="CHEBI:35973"/>
        <dbReference type="ChEBI" id="CHEBI:57292"/>
        <dbReference type="ChEBI" id="CHEBI:90726"/>
        <dbReference type="EC" id="2.8.3.5"/>
    </reaction>
</comment>
<comment type="pathway">
    <text>Ketone metabolism; succinyl-CoA degradation; acetoacetyl-CoA from succinyl-CoA: step 1/1.</text>
</comment>
<comment type="subunit">
    <text evidence="1">Homodimer.</text>
</comment>
<comment type="subcellular location">
    <subcellularLocation>
        <location evidence="1">Mitochondrion</location>
    </subcellularLocation>
</comment>
<comment type="tissue specificity">
    <text evidence="4">Expressed in flagella of epididymal sperm.</text>
</comment>
<comment type="similarity">
    <text evidence="5">Belongs to the 3-oxoacid CoA-transferase family.</text>
</comment>
<proteinExistence type="evidence at protein level"/>
<gene>
    <name type="primary">Oxct2a</name>
</gene>
<feature type="transit peptide" description="Mitochondrion" evidence="1">
    <location>
        <begin position="1"/>
        <end position="39"/>
    </location>
</feature>
<feature type="chain" id="PRO_0000366210" description="Succinyl-CoA:3-ketoacid coenzyme A transferase 2A, mitochondrial">
    <location>
        <begin position="40"/>
        <end position="520"/>
    </location>
</feature>
<feature type="region of interest" description="Disordered" evidence="3">
    <location>
        <begin position="280"/>
        <end position="299"/>
    </location>
</feature>
<feature type="active site" description="5-glutamyl coenzyme A thioester intermediate" evidence="2">
    <location>
        <position position="342"/>
    </location>
</feature>
<organism>
    <name type="scientific">Rattus norvegicus</name>
    <name type="common">Rat</name>
    <dbReference type="NCBI Taxonomy" id="10116"/>
    <lineage>
        <taxon>Eukaryota</taxon>
        <taxon>Metazoa</taxon>
        <taxon>Chordata</taxon>
        <taxon>Craniata</taxon>
        <taxon>Vertebrata</taxon>
        <taxon>Euteleostomi</taxon>
        <taxon>Mammalia</taxon>
        <taxon>Eutheria</taxon>
        <taxon>Euarchontoglires</taxon>
        <taxon>Glires</taxon>
        <taxon>Rodentia</taxon>
        <taxon>Myomorpha</taxon>
        <taxon>Muroidea</taxon>
        <taxon>Muridae</taxon>
        <taxon>Murinae</taxon>
        <taxon>Rattus</taxon>
    </lineage>
</organism>
<name>SCO2A_RAT</name>
<reference key="1">
    <citation type="journal article" date="2004" name="Genome Res.">
        <title>The status, quality, and expansion of the NIH full-length cDNA project: the Mammalian Gene Collection (MGC).</title>
        <authorList>
            <consortium name="The MGC Project Team"/>
        </authorList>
    </citation>
    <scope>NUCLEOTIDE SEQUENCE [LARGE SCALE MRNA]</scope>
    <source>
        <tissue>Testis</tissue>
    </source>
</reference>
<reference key="2">
    <citation type="journal article" date="2009" name="Reproduction">
        <title>Identification of novel immunodominant epididymal sperm proteins using combinatorial approach.</title>
        <authorList>
            <person name="Khan S.A."/>
            <person name="Suryawanshi A.R."/>
            <person name="Ranpura S.A."/>
            <person name="Jadhav S.V."/>
            <person name="Khole V.V."/>
        </authorList>
    </citation>
    <scope>IDENTIFICATION BY MASS SPECTROMETRY</scope>
    <scope>TISSUE SPECIFICITY</scope>
</reference>
<keyword id="KW-0496">Mitochondrion</keyword>
<keyword id="KW-1185">Reference proteome</keyword>
<keyword id="KW-0808">Transferase</keyword>
<keyword id="KW-0809">Transit peptide</keyword>
<accession>Q5XIJ9</accession>
<evidence type="ECO:0000250" key="1"/>
<evidence type="ECO:0000255" key="2">
    <source>
        <dbReference type="PROSITE-ProRule" id="PRU10034"/>
    </source>
</evidence>
<evidence type="ECO:0000256" key="3">
    <source>
        <dbReference type="SAM" id="MobiDB-lite"/>
    </source>
</evidence>
<evidence type="ECO:0000269" key="4">
    <source>
    </source>
</evidence>
<evidence type="ECO:0000305" key="5"/>
<protein>
    <recommendedName>
        <fullName>Succinyl-CoA:3-ketoacid coenzyme A transferase 2A, mitochondrial</fullName>
        <ecNumber>2.8.3.5</ecNumber>
    </recommendedName>
    <alternativeName>
        <fullName>3-oxoacid CoA-transferase 2A</fullName>
    </alternativeName>
    <alternativeName>
        <fullName>Testis-specific succinyl-CoA:3-oxoacid CoA-transferase 1</fullName>
        <shortName>SCOT-t1</shortName>
    </alternativeName>
</protein>